<comment type="function">
    <text evidence="1">Part of the twin-arginine translocation (Tat) system that transports large folded proteins containing a characteristic twin-arginine motif in their signal peptide across membranes. TatA could form the protein-conducting channel of the Tat system.</text>
</comment>
<comment type="subunit">
    <text evidence="1">The Tat system comprises two distinct complexes: a TatABC complex, containing multiple copies of TatA, TatB and TatC subunits, and a separate TatA complex, containing only TatA subunits. Substrates initially bind to the TatABC complex, which probably triggers association of the separate TatA complex to form the active translocon.</text>
</comment>
<comment type="subcellular location">
    <subcellularLocation>
        <location evidence="1">Cell inner membrane</location>
        <topology evidence="1">Single-pass membrane protein</topology>
    </subcellularLocation>
</comment>
<comment type="similarity">
    <text evidence="1">Belongs to the TatA/E family.</text>
</comment>
<name>TATA_DICNV</name>
<feature type="chain" id="PRO_1000071811" description="Sec-independent protein translocase protein TatA">
    <location>
        <begin position="1"/>
        <end position="71"/>
    </location>
</feature>
<feature type="transmembrane region" description="Helical" evidence="1">
    <location>
        <begin position="1"/>
        <end position="21"/>
    </location>
</feature>
<evidence type="ECO:0000255" key="1">
    <source>
        <dbReference type="HAMAP-Rule" id="MF_00236"/>
    </source>
</evidence>
<protein>
    <recommendedName>
        <fullName evidence="1">Sec-independent protein translocase protein TatA</fullName>
    </recommendedName>
</protein>
<sequence>MGASPVQLLIVLFIAVLVFGGKRLRTLGSDVGAAIKGFKEAMKEEPTEPEKLEQQPPVIEVVATQKEKTKG</sequence>
<gene>
    <name evidence="1" type="primary">tatA</name>
    <name type="ordered locus">DNO_0449</name>
</gene>
<organism>
    <name type="scientific">Dichelobacter nodosus (strain VCS1703A)</name>
    <dbReference type="NCBI Taxonomy" id="246195"/>
    <lineage>
        <taxon>Bacteria</taxon>
        <taxon>Pseudomonadati</taxon>
        <taxon>Pseudomonadota</taxon>
        <taxon>Gammaproteobacteria</taxon>
        <taxon>Cardiobacteriales</taxon>
        <taxon>Cardiobacteriaceae</taxon>
        <taxon>Dichelobacter</taxon>
    </lineage>
</organism>
<dbReference type="EMBL" id="CP000513">
    <property type="protein sequence ID" value="ABQ13234.1"/>
    <property type="molecule type" value="Genomic_DNA"/>
</dbReference>
<dbReference type="RefSeq" id="WP_012030787.1">
    <property type="nucleotide sequence ID" value="NC_009446.1"/>
</dbReference>
<dbReference type="SMR" id="A5EVU2"/>
<dbReference type="STRING" id="246195.DNO_0449"/>
<dbReference type="KEGG" id="dno:DNO_0449"/>
<dbReference type="eggNOG" id="COG1826">
    <property type="taxonomic scope" value="Bacteria"/>
</dbReference>
<dbReference type="HOGENOM" id="CLU_086034_5_3_6"/>
<dbReference type="OrthoDB" id="7066617at2"/>
<dbReference type="Proteomes" id="UP000000248">
    <property type="component" value="Chromosome"/>
</dbReference>
<dbReference type="GO" id="GO:0033281">
    <property type="term" value="C:TAT protein transport complex"/>
    <property type="evidence" value="ECO:0007669"/>
    <property type="project" value="UniProtKB-UniRule"/>
</dbReference>
<dbReference type="GO" id="GO:0008320">
    <property type="term" value="F:protein transmembrane transporter activity"/>
    <property type="evidence" value="ECO:0007669"/>
    <property type="project" value="UniProtKB-UniRule"/>
</dbReference>
<dbReference type="GO" id="GO:0043953">
    <property type="term" value="P:protein transport by the Tat complex"/>
    <property type="evidence" value="ECO:0007669"/>
    <property type="project" value="UniProtKB-UniRule"/>
</dbReference>
<dbReference type="Gene3D" id="1.20.5.3310">
    <property type="match status" value="1"/>
</dbReference>
<dbReference type="HAMAP" id="MF_00236">
    <property type="entry name" value="TatA_E"/>
    <property type="match status" value="1"/>
</dbReference>
<dbReference type="InterPro" id="IPR003369">
    <property type="entry name" value="TatA/B/E"/>
</dbReference>
<dbReference type="InterPro" id="IPR006312">
    <property type="entry name" value="TatA/E"/>
</dbReference>
<dbReference type="NCBIfam" id="TIGR01411">
    <property type="entry name" value="tatAE"/>
    <property type="match status" value="1"/>
</dbReference>
<dbReference type="PANTHER" id="PTHR42982">
    <property type="entry name" value="SEC-INDEPENDENT PROTEIN TRANSLOCASE PROTEIN TATA"/>
    <property type="match status" value="1"/>
</dbReference>
<dbReference type="PANTHER" id="PTHR42982:SF1">
    <property type="entry name" value="SEC-INDEPENDENT PROTEIN TRANSLOCASE PROTEIN TATA"/>
    <property type="match status" value="1"/>
</dbReference>
<dbReference type="Pfam" id="PF02416">
    <property type="entry name" value="TatA_B_E"/>
    <property type="match status" value="1"/>
</dbReference>
<reference key="1">
    <citation type="journal article" date="2007" name="Nat. Biotechnol.">
        <title>Genome sequence and identification of candidate vaccine antigens from the animal pathogen Dichelobacter nodosus.</title>
        <authorList>
            <person name="Myers G.S.A."/>
            <person name="Parker D."/>
            <person name="Al-Hasani K."/>
            <person name="Kennan R.M."/>
            <person name="Seemann T."/>
            <person name="Ren Q."/>
            <person name="Badger J.H."/>
            <person name="Selengut J.D."/>
            <person name="Deboy R.T."/>
            <person name="Tettelin H."/>
            <person name="Boyce J.D."/>
            <person name="McCarl V.P."/>
            <person name="Han X."/>
            <person name="Nelson W.C."/>
            <person name="Madupu R."/>
            <person name="Mohamoud Y."/>
            <person name="Holley T."/>
            <person name="Fedorova N."/>
            <person name="Khouri H."/>
            <person name="Bottomley S.P."/>
            <person name="Whittington R.J."/>
            <person name="Adler B."/>
            <person name="Songer J.G."/>
            <person name="Rood J.I."/>
            <person name="Paulsen I.T."/>
        </authorList>
    </citation>
    <scope>NUCLEOTIDE SEQUENCE [LARGE SCALE GENOMIC DNA]</scope>
    <source>
        <strain>VCS1703A</strain>
    </source>
</reference>
<keyword id="KW-0997">Cell inner membrane</keyword>
<keyword id="KW-1003">Cell membrane</keyword>
<keyword id="KW-0472">Membrane</keyword>
<keyword id="KW-0653">Protein transport</keyword>
<keyword id="KW-1185">Reference proteome</keyword>
<keyword id="KW-0811">Translocation</keyword>
<keyword id="KW-0812">Transmembrane</keyword>
<keyword id="KW-1133">Transmembrane helix</keyword>
<keyword id="KW-0813">Transport</keyword>
<proteinExistence type="inferred from homology"/>
<accession>A5EVU2</accession>